<name>ATPA_TOLAT</name>
<organism>
    <name type="scientific">Tolumonas auensis (strain DSM 9187 / NBRC 110442 / TA 4)</name>
    <dbReference type="NCBI Taxonomy" id="595494"/>
    <lineage>
        <taxon>Bacteria</taxon>
        <taxon>Pseudomonadati</taxon>
        <taxon>Pseudomonadota</taxon>
        <taxon>Gammaproteobacteria</taxon>
        <taxon>Aeromonadales</taxon>
        <taxon>Aeromonadaceae</taxon>
        <taxon>Tolumonas</taxon>
    </lineage>
</organism>
<sequence>MQLNSTEIAELIKKRIAQFNVVTEARNEGTIVSVSDGIIRIHGLADVMQGEMIELPGNSYGLALNLERDSVGAIVMGPYTDLAEGQKVTGTGRILEVPVGRGLLGRVVNTLGQPIDGKGPIENDGFAPVEVIAPGVIERQSVSQPVQTGYKAVDAMIPIGRGQRELIIGDRQTGKTALAIDAIINQKDSGIKCVYVAIGQKASTIANVVRKLEEHGALANTIVVVASASESASLQYLAPYSGCTMGEYFRDRGEDALIIYDDLSKHAVAYRQISLLLRRPPGREAYPGDVFYLHSRLLERASRVNTDYVEAFTKGAVKGQTGSLTALPIIETQAGDVSAFVPTNVISITDGQIFLTTQLFNAGIRPAVDPGISVSRVGGAAQTKIIKKLSGGIRTALAQYRELAAFAQFSSDLDDATRKQLNHGQKVTELMKQKQYAPMSVAQQALVLFAAERGYLEDVELNKIGDFEAALLSYANNEHADLMAEINAKADYNDDIVARLSALIDSFKATHTW</sequence>
<protein>
    <recommendedName>
        <fullName evidence="1">ATP synthase subunit alpha</fullName>
        <ecNumber evidence="1">7.1.2.2</ecNumber>
    </recommendedName>
    <alternativeName>
        <fullName evidence="1">ATP synthase F1 sector subunit alpha</fullName>
    </alternativeName>
    <alternativeName>
        <fullName evidence="1">F-ATPase subunit alpha</fullName>
    </alternativeName>
</protein>
<keyword id="KW-0066">ATP synthesis</keyword>
<keyword id="KW-0067">ATP-binding</keyword>
<keyword id="KW-0997">Cell inner membrane</keyword>
<keyword id="KW-1003">Cell membrane</keyword>
<keyword id="KW-0139">CF(1)</keyword>
<keyword id="KW-0375">Hydrogen ion transport</keyword>
<keyword id="KW-0406">Ion transport</keyword>
<keyword id="KW-0472">Membrane</keyword>
<keyword id="KW-0547">Nucleotide-binding</keyword>
<keyword id="KW-1185">Reference proteome</keyword>
<keyword id="KW-1278">Translocase</keyword>
<keyword id="KW-0813">Transport</keyword>
<proteinExistence type="inferred from homology"/>
<dbReference type="EC" id="7.1.2.2" evidence="1"/>
<dbReference type="EMBL" id="CP001616">
    <property type="protein sequence ID" value="ACQ94723.1"/>
    <property type="molecule type" value="Genomic_DNA"/>
</dbReference>
<dbReference type="RefSeq" id="WP_015880172.1">
    <property type="nucleotide sequence ID" value="NC_012691.1"/>
</dbReference>
<dbReference type="SMR" id="C4LDW2"/>
<dbReference type="STRING" id="595494.Tola_3135"/>
<dbReference type="KEGG" id="tau:Tola_3135"/>
<dbReference type="eggNOG" id="COG0056">
    <property type="taxonomic scope" value="Bacteria"/>
</dbReference>
<dbReference type="HOGENOM" id="CLU_010091_2_1_6"/>
<dbReference type="OrthoDB" id="9803053at2"/>
<dbReference type="Proteomes" id="UP000009073">
    <property type="component" value="Chromosome"/>
</dbReference>
<dbReference type="GO" id="GO:0005886">
    <property type="term" value="C:plasma membrane"/>
    <property type="evidence" value="ECO:0007669"/>
    <property type="project" value="UniProtKB-SubCell"/>
</dbReference>
<dbReference type="GO" id="GO:0045259">
    <property type="term" value="C:proton-transporting ATP synthase complex"/>
    <property type="evidence" value="ECO:0007669"/>
    <property type="project" value="UniProtKB-KW"/>
</dbReference>
<dbReference type="GO" id="GO:0043531">
    <property type="term" value="F:ADP binding"/>
    <property type="evidence" value="ECO:0007669"/>
    <property type="project" value="TreeGrafter"/>
</dbReference>
<dbReference type="GO" id="GO:0005524">
    <property type="term" value="F:ATP binding"/>
    <property type="evidence" value="ECO:0007669"/>
    <property type="project" value="UniProtKB-UniRule"/>
</dbReference>
<dbReference type="GO" id="GO:0046933">
    <property type="term" value="F:proton-transporting ATP synthase activity, rotational mechanism"/>
    <property type="evidence" value="ECO:0007669"/>
    <property type="project" value="UniProtKB-UniRule"/>
</dbReference>
<dbReference type="CDD" id="cd18113">
    <property type="entry name" value="ATP-synt_F1_alpha_C"/>
    <property type="match status" value="1"/>
</dbReference>
<dbReference type="CDD" id="cd18116">
    <property type="entry name" value="ATP-synt_F1_alpha_N"/>
    <property type="match status" value="1"/>
</dbReference>
<dbReference type="CDD" id="cd01132">
    <property type="entry name" value="F1-ATPase_alpha_CD"/>
    <property type="match status" value="1"/>
</dbReference>
<dbReference type="FunFam" id="1.20.150.20:FF:000001">
    <property type="entry name" value="ATP synthase subunit alpha"/>
    <property type="match status" value="1"/>
</dbReference>
<dbReference type="FunFam" id="2.40.30.20:FF:000001">
    <property type="entry name" value="ATP synthase subunit alpha"/>
    <property type="match status" value="1"/>
</dbReference>
<dbReference type="FunFam" id="3.40.50.300:FF:000002">
    <property type="entry name" value="ATP synthase subunit alpha"/>
    <property type="match status" value="1"/>
</dbReference>
<dbReference type="Gene3D" id="2.40.30.20">
    <property type="match status" value="1"/>
</dbReference>
<dbReference type="Gene3D" id="1.20.150.20">
    <property type="entry name" value="ATP synthase alpha/beta chain, C-terminal domain"/>
    <property type="match status" value="1"/>
</dbReference>
<dbReference type="Gene3D" id="3.40.50.300">
    <property type="entry name" value="P-loop containing nucleotide triphosphate hydrolases"/>
    <property type="match status" value="1"/>
</dbReference>
<dbReference type="HAMAP" id="MF_01346">
    <property type="entry name" value="ATP_synth_alpha_bact"/>
    <property type="match status" value="1"/>
</dbReference>
<dbReference type="InterPro" id="IPR023366">
    <property type="entry name" value="ATP_synth_asu-like_sf"/>
</dbReference>
<dbReference type="InterPro" id="IPR000793">
    <property type="entry name" value="ATP_synth_asu_C"/>
</dbReference>
<dbReference type="InterPro" id="IPR038376">
    <property type="entry name" value="ATP_synth_asu_C_sf"/>
</dbReference>
<dbReference type="InterPro" id="IPR033732">
    <property type="entry name" value="ATP_synth_F1_a_nt-bd_dom"/>
</dbReference>
<dbReference type="InterPro" id="IPR005294">
    <property type="entry name" value="ATP_synth_F1_asu"/>
</dbReference>
<dbReference type="InterPro" id="IPR020003">
    <property type="entry name" value="ATPase_a/bsu_AS"/>
</dbReference>
<dbReference type="InterPro" id="IPR004100">
    <property type="entry name" value="ATPase_F1/V1/A1_a/bsu_N"/>
</dbReference>
<dbReference type="InterPro" id="IPR036121">
    <property type="entry name" value="ATPase_F1/V1/A1_a/bsu_N_sf"/>
</dbReference>
<dbReference type="InterPro" id="IPR000194">
    <property type="entry name" value="ATPase_F1/V1/A1_a/bsu_nucl-bd"/>
</dbReference>
<dbReference type="InterPro" id="IPR027417">
    <property type="entry name" value="P-loop_NTPase"/>
</dbReference>
<dbReference type="NCBIfam" id="TIGR00962">
    <property type="entry name" value="atpA"/>
    <property type="match status" value="1"/>
</dbReference>
<dbReference type="NCBIfam" id="NF009884">
    <property type="entry name" value="PRK13343.1"/>
    <property type="match status" value="1"/>
</dbReference>
<dbReference type="PANTHER" id="PTHR48082">
    <property type="entry name" value="ATP SYNTHASE SUBUNIT ALPHA, MITOCHONDRIAL"/>
    <property type="match status" value="1"/>
</dbReference>
<dbReference type="PANTHER" id="PTHR48082:SF2">
    <property type="entry name" value="ATP SYNTHASE SUBUNIT ALPHA, MITOCHONDRIAL"/>
    <property type="match status" value="1"/>
</dbReference>
<dbReference type="Pfam" id="PF00006">
    <property type="entry name" value="ATP-synt_ab"/>
    <property type="match status" value="1"/>
</dbReference>
<dbReference type="Pfam" id="PF00306">
    <property type="entry name" value="ATP-synt_ab_C"/>
    <property type="match status" value="1"/>
</dbReference>
<dbReference type="Pfam" id="PF02874">
    <property type="entry name" value="ATP-synt_ab_N"/>
    <property type="match status" value="1"/>
</dbReference>
<dbReference type="SUPFAM" id="SSF47917">
    <property type="entry name" value="C-terminal domain of alpha and beta subunits of F1 ATP synthase"/>
    <property type="match status" value="1"/>
</dbReference>
<dbReference type="SUPFAM" id="SSF50615">
    <property type="entry name" value="N-terminal domain of alpha and beta subunits of F1 ATP synthase"/>
    <property type="match status" value="1"/>
</dbReference>
<dbReference type="SUPFAM" id="SSF52540">
    <property type="entry name" value="P-loop containing nucleoside triphosphate hydrolases"/>
    <property type="match status" value="1"/>
</dbReference>
<dbReference type="PROSITE" id="PS00152">
    <property type="entry name" value="ATPASE_ALPHA_BETA"/>
    <property type="match status" value="1"/>
</dbReference>
<gene>
    <name evidence="1" type="primary">atpA</name>
    <name type="ordered locus">Tola_3135</name>
</gene>
<evidence type="ECO:0000255" key="1">
    <source>
        <dbReference type="HAMAP-Rule" id="MF_01346"/>
    </source>
</evidence>
<reference key="1">
    <citation type="submission" date="2009-05" db="EMBL/GenBank/DDBJ databases">
        <title>Complete sequence of Tolumonas auensis DSM 9187.</title>
        <authorList>
            <consortium name="US DOE Joint Genome Institute"/>
            <person name="Lucas S."/>
            <person name="Copeland A."/>
            <person name="Lapidus A."/>
            <person name="Glavina del Rio T."/>
            <person name="Tice H."/>
            <person name="Bruce D."/>
            <person name="Goodwin L."/>
            <person name="Pitluck S."/>
            <person name="Chertkov O."/>
            <person name="Brettin T."/>
            <person name="Detter J.C."/>
            <person name="Han C."/>
            <person name="Larimer F."/>
            <person name="Land M."/>
            <person name="Hauser L."/>
            <person name="Kyrpides N."/>
            <person name="Mikhailova N."/>
            <person name="Spring S."/>
            <person name="Beller H."/>
        </authorList>
    </citation>
    <scope>NUCLEOTIDE SEQUENCE [LARGE SCALE GENOMIC DNA]</scope>
    <source>
        <strain>DSM 9187 / NBRC 110442 / TA 4</strain>
    </source>
</reference>
<comment type="function">
    <text evidence="1">Produces ATP from ADP in the presence of a proton gradient across the membrane. The alpha chain is a regulatory subunit.</text>
</comment>
<comment type="catalytic activity">
    <reaction evidence="1">
        <text>ATP + H2O + 4 H(+)(in) = ADP + phosphate + 5 H(+)(out)</text>
        <dbReference type="Rhea" id="RHEA:57720"/>
        <dbReference type="ChEBI" id="CHEBI:15377"/>
        <dbReference type="ChEBI" id="CHEBI:15378"/>
        <dbReference type="ChEBI" id="CHEBI:30616"/>
        <dbReference type="ChEBI" id="CHEBI:43474"/>
        <dbReference type="ChEBI" id="CHEBI:456216"/>
        <dbReference type="EC" id="7.1.2.2"/>
    </reaction>
</comment>
<comment type="subunit">
    <text evidence="1">F-type ATPases have 2 components, CF(1) - the catalytic core - and CF(0) - the membrane proton channel. CF(1) has five subunits: alpha(3), beta(3), gamma(1), delta(1), epsilon(1). CF(0) has three main subunits: a(1), b(2) and c(9-12). The alpha and beta chains form an alternating ring which encloses part of the gamma chain. CF(1) is attached to CF(0) by a central stalk formed by the gamma and epsilon chains, while a peripheral stalk is formed by the delta and b chains.</text>
</comment>
<comment type="subcellular location">
    <subcellularLocation>
        <location evidence="1">Cell inner membrane</location>
        <topology evidence="1">Peripheral membrane protein</topology>
    </subcellularLocation>
</comment>
<comment type="similarity">
    <text evidence="1">Belongs to the ATPase alpha/beta chains family.</text>
</comment>
<accession>C4LDW2</accession>
<feature type="chain" id="PRO_1000214820" description="ATP synthase subunit alpha">
    <location>
        <begin position="1"/>
        <end position="513"/>
    </location>
</feature>
<feature type="binding site" evidence="1">
    <location>
        <begin position="169"/>
        <end position="176"/>
    </location>
    <ligand>
        <name>ATP</name>
        <dbReference type="ChEBI" id="CHEBI:30616"/>
    </ligand>
</feature>
<feature type="site" description="Required for activity" evidence="1">
    <location>
        <position position="373"/>
    </location>
</feature>